<reference key="1">
    <citation type="journal article" date="2006" name="Genes Genet. Syst.">
        <title>Complete nucleotide sequence of the cotton (Gossypium barbadense L.) chloroplast genome with a comparative analysis of sequences among 9 dicot plants.</title>
        <authorList>
            <person name="Ibrahim R.I.H."/>
            <person name="Azuma J."/>
            <person name="Sakamoto M."/>
        </authorList>
    </citation>
    <scope>NUCLEOTIDE SEQUENCE [LARGE SCALE GENOMIC DNA]</scope>
</reference>
<name>CCSA_GOSBA</name>
<keyword id="KW-0150">Chloroplast</keyword>
<keyword id="KW-0201">Cytochrome c-type biogenesis</keyword>
<keyword id="KW-0472">Membrane</keyword>
<keyword id="KW-0934">Plastid</keyword>
<keyword id="KW-0793">Thylakoid</keyword>
<keyword id="KW-0812">Transmembrane</keyword>
<keyword id="KW-1133">Transmembrane helix</keyword>
<gene>
    <name evidence="1" type="primary">ccsA</name>
</gene>
<dbReference type="EMBL" id="AP009123">
    <property type="protein sequence ID" value="BAF41296.1"/>
    <property type="molecule type" value="Genomic_DNA"/>
</dbReference>
<dbReference type="RefSeq" id="YP_913235.1">
    <property type="nucleotide sequence ID" value="NC_008641.1"/>
</dbReference>
<dbReference type="SMR" id="A0ZZ84"/>
<dbReference type="GeneID" id="4575190"/>
<dbReference type="GO" id="GO:0009535">
    <property type="term" value="C:chloroplast thylakoid membrane"/>
    <property type="evidence" value="ECO:0007669"/>
    <property type="project" value="UniProtKB-SubCell"/>
</dbReference>
<dbReference type="GO" id="GO:0005886">
    <property type="term" value="C:plasma membrane"/>
    <property type="evidence" value="ECO:0007669"/>
    <property type="project" value="TreeGrafter"/>
</dbReference>
<dbReference type="GO" id="GO:0020037">
    <property type="term" value="F:heme binding"/>
    <property type="evidence" value="ECO:0007669"/>
    <property type="project" value="InterPro"/>
</dbReference>
<dbReference type="GO" id="GO:0017004">
    <property type="term" value="P:cytochrome complex assembly"/>
    <property type="evidence" value="ECO:0007669"/>
    <property type="project" value="UniProtKB-UniRule"/>
</dbReference>
<dbReference type="HAMAP" id="MF_01391">
    <property type="entry name" value="CytC_CcsA"/>
    <property type="match status" value="1"/>
</dbReference>
<dbReference type="InterPro" id="IPR002541">
    <property type="entry name" value="Cyt_c_assembly"/>
</dbReference>
<dbReference type="InterPro" id="IPR017562">
    <property type="entry name" value="Cyt_c_biogenesis_CcsA"/>
</dbReference>
<dbReference type="InterPro" id="IPR045062">
    <property type="entry name" value="Cyt_c_biogenesis_CcsA/CcmC"/>
</dbReference>
<dbReference type="NCBIfam" id="TIGR03144">
    <property type="entry name" value="cytochr_II_ccsB"/>
    <property type="match status" value="1"/>
</dbReference>
<dbReference type="PANTHER" id="PTHR30071:SF1">
    <property type="entry name" value="CYTOCHROME B_B6 PROTEIN-RELATED"/>
    <property type="match status" value="1"/>
</dbReference>
<dbReference type="PANTHER" id="PTHR30071">
    <property type="entry name" value="HEME EXPORTER PROTEIN C"/>
    <property type="match status" value="1"/>
</dbReference>
<dbReference type="Pfam" id="PF01578">
    <property type="entry name" value="Cytochrom_C_asm"/>
    <property type="match status" value="1"/>
</dbReference>
<proteinExistence type="inferred from homology"/>
<accession>A0ZZ84</accession>
<evidence type="ECO:0000255" key="1">
    <source>
        <dbReference type="HAMAP-Rule" id="MF_01391"/>
    </source>
</evidence>
<sequence length="320" mass="36474">MIFSTLEHILTHISFSVVSIVITIHFLTLFLLVDEVVGLYDSSEKGMIVTFFCITGLLVTRWIYSGHFPLSDLYESLIFLSWGFSLIHMVSYLKFKKRKNNLSAITAPRAIFTQGFATSGLLTKMHQSAILAPALQSQWLMMHVSMMVLGYAALLCGSLLSVALLVITFRKAIKIIGENNNFSFSFGKIQYMNERSNVLLNTYFLSSKNYYRYQLTQQLDRWSYRIISLGFIFLTIGILSGAVWANEAWGSYWNWDPKETWAFITWTVFAIYFHTRTNTNLEGVNSALVASMGFLIIWICYFGVNLLGIGLHSYGSFTLN</sequence>
<comment type="function">
    <text evidence="1">Required during biogenesis of c-type cytochromes (cytochrome c6 and cytochrome f) at the step of heme attachment.</text>
</comment>
<comment type="subunit">
    <text evidence="1">May interact with Ccs1.</text>
</comment>
<comment type="subcellular location">
    <subcellularLocation>
        <location evidence="1">Plastid</location>
        <location evidence="1">Chloroplast thylakoid membrane</location>
        <topology evidence="1">Multi-pass membrane protein</topology>
    </subcellularLocation>
</comment>
<comment type="similarity">
    <text evidence="1">Belongs to the CcmF/CycK/Ccl1/NrfE/CcsA family.</text>
</comment>
<feature type="chain" id="PRO_0000353754" description="Cytochrome c biogenesis protein CcsA">
    <location>
        <begin position="1"/>
        <end position="320"/>
    </location>
</feature>
<feature type="transmembrane region" description="Helical" evidence="1">
    <location>
        <begin position="13"/>
        <end position="33"/>
    </location>
</feature>
<feature type="transmembrane region" description="Helical" evidence="1">
    <location>
        <begin position="46"/>
        <end position="66"/>
    </location>
</feature>
<feature type="transmembrane region" description="Helical" evidence="1">
    <location>
        <begin position="73"/>
        <end position="93"/>
    </location>
</feature>
<feature type="transmembrane region" description="Helical" evidence="1">
    <location>
        <begin position="147"/>
        <end position="167"/>
    </location>
</feature>
<feature type="transmembrane region" description="Helical" evidence="1">
    <location>
        <begin position="226"/>
        <end position="246"/>
    </location>
</feature>
<feature type="transmembrane region" description="Helical" evidence="1">
    <location>
        <begin position="259"/>
        <end position="274"/>
    </location>
</feature>
<feature type="transmembrane region" description="Helical" evidence="1">
    <location>
        <begin position="289"/>
        <end position="309"/>
    </location>
</feature>
<organism>
    <name type="scientific">Gossypium barbadense</name>
    <name type="common">Sea Island cotton</name>
    <name type="synonym">Hibiscus barbadensis</name>
    <dbReference type="NCBI Taxonomy" id="3634"/>
    <lineage>
        <taxon>Eukaryota</taxon>
        <taxon>Viridiplantae</taxon>
        <taxon>Streptophyta</taxon>
        <taxon>Embryophyta</taxon>
        <taxon>Tracheophyta</taxon>
        <taxon>Spermatophyta</taxon>
        <taxon>Magnoliopsida</taxon>
        <taxon>eudicotyledons</taxon>
        <taxon>Gunneridae</taxon>
        <taxon>Pentapetalae</taxon>
        <taxon>rosids</taxon>
        <taxon>malvids</taxon>
        <taxon>Malvales</taxon>
        <taxon>Malvaceae</taxon>
        <taxon>Malvoideae</taxon>
        <taxon>Gossypium</taxon>
    </lineage>
</organism>
<geneLocation type="chloroplast"/>
<protein>
    <recommendedName>
        <fullName evidence="1">Cytochrome c biogenesis protein CcsA</fullName>
    </recommendedName>
</protein>